<dbReference type="EC" id="3.1.3.-"/>
<dbReference type="EMBL" id="AL033545">
    <property type="protein sequence ID" value="CAA22160.1"/>
    <property type="molecule type" value="Genomic_DNA"/>
</dbReference>
<dbReference type="EMBL" id="AL161557">
    <property type="protein sequence ID" value="CAB79210.1"/>
    <property type="molecule type" value="Genomic_DNA"/>
</dbReference>
<dbReference type="EMBL" id="CP002687">
    <property type="protein sequence ID" value="AEE84623.1"/>
    <property type="molecule type" value="Genomic_DNA"/>
</dbReference>
<dbReference type="EMBL" id="BT005739">
    <property type="protein sequence ID" value="AAO64149.1"/>
    <property type="molecule type" value="mRNA"/>
</dbReference>
<dbReference type="EMBL" id="BT006091">
    <property type="protein sequence ID" value="AAP04076.1"/>
    <property type="molecule type" value="mRNA"/>
</dbReference>
<dbReference type="EMBL" id="AK228662">
    <property type="protein sequence ID" value="BAF00569.1"/>
    <property type="molecule type" value="mRNA"/>
</dbReference>
<dbReference type="PIR" id="T05449">
    <property type="entry name" value="T05449"/>
</dbReference>
<dbReference type="RefSeq" id="NP_193986.1">
    <property type="nucleotide sequence ID" value="NM_118381.4"/>
</dbReference>
<dbReference type="SMR" id="Q9SUW4"/>
<dbReference type="FunCoup" id="Q9SUW4">
    <property type="interactions" value="214"/>
</dbReference>
<dbReference type="STRING" id="3702.Q9SUW4"/>
<dbReference type="PaxDb" id="3702-AT4G22550.1"/>
<dbReference type="ProteomicsDB" id="238719"/>
<dbReference type="EnsemblPlants" id="AT4G22550.1">
    <property type="protein sequence ID" value="AT4G22550.1"/>
    <property type="gene ID" value="AT4G22550"/>
</dbReference>
<dbReference type="GeneID" id="828351"/>
<dbReference type="Gramene" id="AT4G22550.1">
    <property type="protein sequence ID" value="AT4G22550.1"/>
    <property type="gene ID" value="AT4G22550"/>
</dbReference>
<dbReference type="KEGG" id="ath:AT4G22550"/>
<dbReference type="Araport" id="AT4G22550"/>
<dbReference type="TAIR" id="AT4G22550">
    <property type="gene designation" value="LPPBETA"/>
</dbReference>
<dbReference type="eggNOG" id="KOG4268">
    <property type="taxonomic scope" value="Eukaryota"/>
</dbReference>
<dbReference type="HOGENOM" id="CLU_072573_4_2_1"/>
<dbReference type="InParanoid" id="Q9SUW4"/>
<dbReference type="OMA" id="LKINCKF"/>
<dbReference type="OrthoDB" id="10266771at2759"/>
<dbReference type="PhylomeDB" id="Q9SUW4"/>
<dbReference type="BRENDA" id="3.1.3.4">
    <property type="organism ID" value="399"/>
</dbReference>
<dbReference type="PRO" id="PR:Q9SUW4"/>
<dbReference type="Proteomes" id="UP000006548">
    <property type="component" value="Chromosome 4"/>
</dbReference>
<dbReference type="ExpressionAtlas" id="Q9SUW4">
    <property type="expression patterns" value="baseline and differential"/>
</dbReference>
<dbReference type="GO" id="GO:0016020">
    <property type="term" value="C:membrane"/>
    <property type="evidence" value="ECO:0007669"/>
    <property type="project" value="UniProtKB-SubCell"/>
</dbReference>
<dbReference type="GO" id="GO:0016787">
    <property type="term" value="F:hydrolase activity"/>
    <property type="evidence" value="ECO:0007669"/>
    <property type="project" value="UniProtKB-KW"/>
</dbReference>
<dbReference type="CDD" id="cd03391">
    <property type="entry name" value="PAP2_containing_2_like"/>
    <property type="match status" value="1"/>
</dbReference>
<dbReference type="Gene3D" id="1.20.144.10">
    <property type="entry name" value="Phosphatidic acid phosphatase type 2/haloperoxidase"/>
    <property type="match status" value="1"/>
</dbReference>
<dbReference type="InterPro" id="IPR036938">
    <property type="entry name" value="P_Acid_Pase_2/haloperoxi_sf"/>
</dbReference>
<dbReference type="InterPro" id="IPR000326">
    <property type="entry name" value="P_Acid_Pase_2/haloperoxidase"/>
</dbReference>
<dbReference type="PANTHER" id="PTHR14969:SF13">
    <property type="entry name" value="AT30094P"/>
    <property type="match status" value="1"/>
</dbReference>
<dbReference type="PANTHER" id="PTHR14969">
    <property type="entry name" value="SPHINGOSINE-1-PHOSPHATE PHOSPHOHYDROLASE"/>
    <property type="match status" value="1"/>
</dbReference>
<dbReference type="Pfam" id="PF01569">
    <property type="entry name" value="PAP2"/>
    <property type="match status" value="1"/>
</dbReference>
<dbReference type="SMART" id="SM00014">
    <property type="entry name" value="acidPPc"/>
    <property type="match status" value="1"/>
</dbReference>
<dbReference type="SUPFAM" id="SSF48317">
    <property type="entry name" value="Acid phosphatase/Vanadium-dependent haloperoxidase"/>
    <property type="match status" value="1"/>
</dbReference>
<proteinExistence type="evidence at transcript level"/>
<keyword id="KW-0378">Hydrolase</keyword>
<keyword id="KW-0472">Membrane</keyword>
<keyword id="KW-1185">Reference proteome</keyword>
<keyword id="KW-0812">Transmembrane</keyword>
<keyword id="KW-1133">Transmembrane helix</keyword>
<accession>Q9SUW4</accession>
<reference key="1">
    <citation type="journal article" date="1999" name="Nature">
        <title>Sequence and analysis of chromosome 4 of the plant Arabidopsis thaliana.</title>
        <authorList>
            <person name="Mayer K.F.X."/>
            <person name="Schueller C."/>
            <person name="Wambutt R."/>
            <person name="Murphy G."/>
            <person name="Volckaert G."/>
            <person name="Pohl T."/>
            <person name="Duesterhoeft A."/>
            <person name="Stiekema W."/>
            <person name="Entian K.-D."/>
            <person name="Terryn N."/>
            <person name="Harris B."/>
            <person name="Ansorge W."/>
            <person name="Brandt P."/>
            <person name="Grivell L.A."/>
            <person name="Rieger M."/>
            <person name="Weichselgartner M."/>
            <person name="de Simone V."/>
            <person name="Obermaier B."/>
            <person name="Mache R."/>
            <person name="Mueller M."/>
            <person name="Kreis M."/>
            <person name="Delseny M."/>
            <person name="Puigdomenech P."/>
            <person name="Watson M."/>
            <person name="Schmidtheini T."/>
            <person name="Reichert B."/>
            <person name="Portetelle D."/>
            <person name="Perez-Alonso M."/>
            <person name="Boutry M."/>
            <person name="Bancroft I."/>
            <person name="Vos P."/>
            <person name="Hoheisel J."/>
            <person name="Zimmermann W."/>
            <person name="Wedler H."/>
            <person name="Ridley P."/>
            <person name="Langham S.-A."/>
            <person name="McCullagh B."/>
            <person name="Bilham L."/>
            <person name="Robben J."/>
            <person name="van der Schueren J."/>
            <person name="Grymonprez B."/>
            <person name="Chuang Y.-J."/>
            <person name="Vandenbussche F."/>
            <person name="Braeken M."/>
            <person name="Weltjens I."/>
            <person name="Voet M."/>
            <person name="Bastiaens I."/>
            <person name="Aert R."/>
            <person name="Defoor E."/>
            <person name="Weitzenegger T."/>
            <person name="Bothe G."/>
            <person name="Ramsperger U."/>
            <person name="Hilbert H."/>
            <person name="Braun M."/>
            <person name="Holzer E."/>
            <person name="Brandt A."/>
            <person name="Peters S."/>
            <person name="van Staveren M."/>
            <person name="Dirkse W."/>
            <person name="Mooijman P."/>
            <person name="Klein Lankhorst R."/>
            <person name="Rose M."/>
            <person name="Hauf J."/>
            <person name="Koetter P."/>
            <person name="Berneiser S."/>
            <person name="Hempel S."/>
            <person name="Feldpausch M."/>
            <person name="Lamberth S."/>
            <person name="Van den Daele H."/>
            <person name="De Keyser A."/>
            <person name="Buysshaert C."/>
            <person name="Gielen J."/>
            <person name="Villarroel R."/>
            <person name="De Clercq R."/>
            <person name="van Montagu M."/>
            <person name="Rogers J."/>
            <person name="Cronin A."/>
            <person name="Quail M.A."/>
            <person name="Bray-Allen S."/>
            <person name="Clark L."/>
            <person name="Doggett J."/>
            <person name="Hall S."/>
            <person name="Kay M."/>
            <person name="Lennard N."/>
            <person name="McLay K."/>
            <person name="Mayes R."/>
            <person name="Pettett A."/>
            <person name="Rajandream M.A."/>
            <person name="Lyne M."/>
            <person name="Benes V."/>
            <person name="Rechmann S."/>
            <person name="Borkova D."/>
            <person name="Bloecker H."/>
            <person name="Scharfe M."/>
            <person name="Grimm M."/>
            <person name="Loehnert T.-H."/>
            <person name="Dose S."/>
            <person name="de Haan M."/>
            <person name="Maarse A.C."/>
            <person name="Schaefer M."/>
            <person name="Mueller-Auer S."/>
            <person name="Gabel C."/>
            <person name="Fuchs M."/>
            <person name="Fartmann B."/>
            <person name="Granderath K."/>
            <person name="Dauner D."/>
            <person name="Herzl A."/>
            <person name="Neumann S."/>
            <person name="Argiriou A."/>
            <person name="Vitale D."/>
            <person name="Liguori R."/>
            <person name="Piravandi E."/>
            <person name="Massenet O."/>
            <person name="Quigley F."/>
            <person name="Clabauld G."/>
            <person name="Muendlein A."/>
            <person name="Felber R."/>
            <person name="Schnabl S."/>
            <person name="Hiller R."/>
            <person name="Schmidt W."/>
            <person name="Lecharny A."/>
            <person name="Aubourg S."/>
            <person name="Chefdor F."/>
            <person name="Cooke R."/>
            <person name="Berger C."/>
            <person name="Monfort A."/>
            <person name="Casacuberta E."/>
            <person name="Gibbons T."/>
            <person name="Weber N."/>
            <person name="Vandenbol M."/>
            <person name="Bargues M."/>
            <person name="Terol J."/>
            <person name="Torres A."/>
            <person name="Perez-Perez A."/>
            <person name="Purnelle B."/>
            <person name="Bent E."/>
            <person name="Johnson S."/>
            <person name="Tacon D."/>
            <person name="Jesse T."/>
            <person name="Heijnen L."/>
            <person name="Schwarz S."/>
            <person name="Scholler P."/>
            <person name="Heber S."/>
            <person name="Francs P."/>
            <person name="Bielke C."/>
            <person name="Frishman D."/>
            <person name="Haase D."/>
            <person name="Lemcke K."/>
            <person name="Mewes H.-W."/>
            <person name="Stocker S."/>
            <person name="Zaccaria P."/>
            <person name="Bevan M."/>
            <person name="Wilson R.K."/>
            <person name="de la Bastide M."/>
            <person name="Habermann K."/>
            <person name="Parnell L."/>
            <person name="Dedhia N."/>
            <person name="Gnoj L."/>
            <person name="Schutz K."/>
            <person name="Huang E."/>
            <person name="Spiegel L."/>
            <person name="Sekhon M."/>
            <person name="Murray J."/>
            <person name="Sheet P."/>
            <person name="Cordes M."/>
            <person name="Abu-Threideh J."/>
            <person name="Stoneking T."/>
            <person name="Kalicki J."/>
            <person name="Graves T."/>
            <person name="Harmon G."/>
            <person name="Edwards J."/>
            <person name="Latreille P."/>
            <person name="Courtney L."/>
            <person name="Cloud J."/>
            <person name="Abbott A."/>
            <person name="Scott K."/>
            <person name="Johnson D."/>
            <person name="Minx P."/>
            <person name="Bentley D."/>
            <person name="Fulton B."/>
            <person name="Miller N."/>
            <person name="Greco T."/>
            <person name="Kemp K."/>
            <person name="Kramer J."/>
            <person name="Fulton L."/>
            <person name="Mardis E."/>
            <person name="Dante M."/>
            <person name="Pepin K."/>
            <person name="Hillier L.W."/>
            <person name="Nelson J."/>
            <person name="Spieth J."/>
            <person name="Ryan E."/>
            <person name="Andrews S."/>
            <person name="Geisel C."/>
            <person name="Layman D."/>
            <person name="Du H."/>
            <person name="Ali J."/>
            <person name="Berghoff A."/>
            <person name="Jones K."/>
            <person name="Drone K."/>
            <person name="Cotton M."/>
            <person name="Joshu C."/>
            <person name="Antonoiu B."/>
            <person name="Zidanic M."/>
            <person name="Strong C."/>
            <person name="Sun H."/>
            <person name="Lamar B."/>
            <person name="Yordan C."/>
            <person name="Ma P."/>
            <person name="Zhong J."/>
            <person name="Preston R."/>
            <person name="Vil D."/>
            <person name="Shekher M."/>
            <person name="Matero A."/>
            <person name="Shah R."/>
            <person name="Swaby I.K."/>
            <person name="O'Shaughnessy A."/>
            <person name="Rodriguez M."/>
            <person name="Hoffman J."/>
            <person name="Till S."/>
            <person name="Granat S."/>
            <person name="Shohdy N."/>
            <person name="Hasegawa A."/>
            <person name="Hameed A."/>
            <person name="Lodhi M."/>
            <person name="Johnson A."/>
            <person name="Chen E."/>
            <person name="Marra M.A."/>
            <person name="Martienssen R."/>
            <person name="McCombie W.R."/>
        </authorList>
    </citation>
    <scope>NUCLEOTIDE SEQUENCE [LARGE SCALE GENOMIC DNA]</scope>
    <source>
        <strain>cv. Columbia</strain>
    </source>
</reference>
<reference key="2">
    <citation type="journal article" date="2017" name="Plant J.">
        <title>Araport11: a complete reannotation of the Arabidopsis thaliana reference genome.</title>
        <authorList>
            <person name="Cheng C.Y."/>
            <person name="Krishnakumar V."/>
            <person name="Chan A.P."/>
            <person name="Thibaud-Nissen F."/>
            <person name="Schobel S."/>
            <person name="Town C.D."/>
        </authorList>
    </citation>
    <scope>GENOME REANNOTATION</scope>
    <source>
        <strain>cv. Columbia</strain>
    </source>
</reference>
<reference key="3">
    <citation type="journal article" date="2003" name="Science">
        <title>Empirical analysis of transcriptional activity in the Arabidopsis genome.</title>
        <authorList>
            <person name="Yamada K."/>
            <person name="Lim J."/>
            <person name="Dale J.M."/>
            <person name="Chen H."/>
            <person name="Shinn P."/>
            <person name="Palm C.J."/>
            <person name="Southwick A.M."/>
            <person name="Wu H.C."/>
            <person name="Kim C.J."/>
            <person name="Nguyen M."/>
            <person name="Pham P.K."/>
            <person name="Cheuk R.F."/>
            <person name="Karlin-Newmann G."/>
            <person name="Liu S.X."/>
            <person name="Lam B."/>
            <person name="Sakano H."/>
            <person name="Wu T."/>
            <person name="Yu G."/>
            <person name="Miranda M."/>
            <person name="Quach H.L."/>
            <person name="Tripp M."/>
            <person name="Chang C.H."/>
            <person name="Lee J.M."/>
            <person name="Toriumi M.J."/>
            <person name="Chan M.M."/>
            <person name="Tang C.C."/>
            <person name="Onodera C.S."/>
            <person name="Deng J.M."/>
            <person name="Akiyama K."/>
            <person name="Ansari Y."/>
            <person name="Arakawa T."/>
            <person name="Banh J."/>
            <person name="Banno F."/>
            <person name="Bowser L."/>
            <person name="Brooks S.Y."/>
            <person name="Carninci P."/>
            <person name="Chao Q."/>
            <person name="Choy N."/>
            <person name="Enju A."/>
            <person name="Goldsmith A.D."/>
            <person name="Gurjal M."/>
            <person name="Hansen N.F."/>
            <person name="Hayashizaki Y."/>
            <person name="Johnson-Hopson C."/>
            <person name="Hsuan V.W."/>
            <person name="Iida K."/>
            <person name="Karnes M."/>
            <person name="Khan S."/>
            <person name="Koesema E."/>
            <person name="Ishida J."/>
            <person name="Jiang P.X."/>
            <person name="Jones T."/>
            <person name="Kawai J."/>
            <person name="Kamiya A."/>
            <person name="Meyers C."/>
            <person name="Nakajima M."/>
            <person name="Narusaka M."/>
            <person name="Seki M."/>
            <person name="Sakurai T."/>
            <person name="Satou M."/>
            <person name="Tamse R."/>
            <person name="Vaysberg M."/>
            <person name="Wallender E.K."/>
            <person name="Wong C."/>
            <person name="Yamamura Y."/>
            <person name="Yuan S."/>
            <person name="Shinozaki K."/>
            <person name="Davis R.W."/>
            <person name="Theologis A."/>
            <person name="Ecker J.R."/>
        </authorList>
    </citation>
    <scope>NUCLEOTIDE SEQUENCE [LARGE SCALE MRNA]</scope>
    <source>
        <strain>cv. Columbia</strain>
    </source>
</reference>
<reference key="4">
    <citation type="submission" date="2006-07" db="EMBL/GenBank/DDBJ databases">
        <title>Large-scale analysis of RIKEN Arabidopsis full-length (RAFL) cDNAs.</title>
        <authorList>
            <person name="Totoki Y."/>
            <person name="Seki M."/>
            <person name="Ishida J."/>
            <person name="Nakajima M."/>
            <person name="Enju A."/>
            <person name="Kamiya A."/>
            <person name="Narusaka M."/>
            <person name="Shin-i T."/>
            <person name="Nakagawa M."/>
            <person name="Sakamoto N."/>
            <person name="Oishi K."/>
            <person name="Kohara Y."/>
            <person name="Kobayashi M."/>
            <person name="Toyoda A."/>
            <person name="Sakaki Y."/>
            <person name="Sakurai T."/>
            <person name="Iida K."/>
            <person name="Akiyama K."/>
            <person name="Satou M."/>
            <person name="Toyoda T."/>
            <person name="Konagaya A."/>
            <person name="Carninci P."/>
            <person name="Kawai J."/>
            <person name="Hayashizaki Y."/>
            <person name="Shinozaki K."/>
        </authorList>
    </citation>
    <scope>NUCLEOTIDE SEQUENCE [LARGE SCALE MRNA]</scope>
    <source>
        <strain>cv. Columbia</strain>
    </source>
</reference>
<gene>
    <name type="primary">LPPB</name>
    <name type="ordered locus">At4g22550</name>
    <name type="ORF">F7K2.130</name>
</gene>
<sequence>MSPSTTTIFIGPILAVDAAVSHAIHTAAKPFLPPFVLLLLEISADFRFSFPVSLSFLLSPPLRSFLVPFLLGLLFDLIFVGIVKLIFRRARPAYNHPSMSAAVSADHYSFPSGHASRVFFVAASVHFFSAAAEASMTGPSYSFLDGWIRDHNDGDVKVEVVVVVWIWATVTAISRILLGRHYVLDVAAGAFLGIVEALFALRFLRFDEMIFGR</sequence>
<comment type="subcellular location">
    <subcellularLocation>
        <location evidence="2">Membrane</location>
        <topology evidence="2">Multi-pass membrane protein</topology>
    </subcellularLocation>
</comment>
<comment type="similarity">
    <text evidence="2">Belongs to the PA-phosphatase related phosphoesterase family.</text>
</comment>
<name>LPPB_ARATH</name>
<protein>
    <recommendedName>
        <fullName>Probable lipid phosphate phosphatase beta</fullName>
        <shortName>AtLPPB</shortName>
        <ecNumber>3.1.3.-</ecNumber>
    </recommendedName>
    <alternativeName>
        <fullName>Phosphatidic acid phosphatase beta</fullName>
    </alternativeName>
</protein>
<evidence type="ECO:0000255" key="1"/>
<evidence type="ECO:0000305" key="2"/>
<feature type="chain" id="PRO_0000425226" description="Probable lipid phosphate phosphatase beta">
    <location>
        <begin position="1"/>
        <end position="213"/>
    </location>
</feature>
<feature type="transmembrane region" description="Helical" evidence="1">
    <location>
        <begin position="30"/>
        <end position="50"/>
    </location>
</feature>
<feature type="transmembrane region" description="Helical" evidence="1">
    <location>
        <begin position="67"/>
        <end position="87"/>
    </location>
</feature>
<feature type="transmembrane region" description="Helical" evidence="1">
    <location>
        <begin position="118"/>
        <end position="138"/>
    </location>
</feature>
<feature type="transmembrane region" description="Helical" evidence="1">
    <location>
        <begin position="158"/>
        <end position="178"/>
    </location>
</feature>
<feature type="transmembrane region" description="Helical" evidence="1">
    <location>
        <begin position="181"/>
        <end position="201"/>
    </location>
</feature>
<organism>
    <name type="scientific">Arabidopsis thaliana</name>
    <name type="common">Mouse-ear cress</name>
    <dbReference type="NCBI Taxonomy" id="3702"/>
    <lineage>
        <taxon>Eukaryota</taxon>
        <taxon>Viridiplantae</taxon>
        <taxon>Streptophyta</taxon>
        <taxon>Embryophyta</taxon>
        <taxon>Tracheophyta</taxon>
        <taxon>Spermatophyta</taxon>
        <taxon>Magnoliopsida</taxon>
        <taxon>eudicotyledons</taxon>
        <taxon>Gunneridae</taxon>
        <taxon>Pentapetalae</taxon>
        <taxon>rosids</taxon>
        <taxon>malvids</taxon>
        <taxon>Brassicales</taxon>
        <taxon>Brassicaceae</taxon>
        <taxon>Camelineae</taxon>
        <taxon>Arabidopsis</taxon>
    </lineage>
</organism>